<organism>
    <name type="scientific">Klebsiella pneumoniae (strain 342)</name>
    <dbReference type="NCBI Taxonomy" id="507522"/>
    <lineage>
        <taxon>Bacteria</taxon>
        <taxon>Pseudomonadati</taxon>
        <taxon>Pseudomonadota</taxon>
        <taxon>Gammaproteobacteria</taxon>
        <taxon>Enterobacterales</taxon>
        <taxon>Enterobacteriaceae</taxon>
        <taxon>Klebsiella/Raoultella group</taxon>
        <taxon>Klebsiella</taxon>
        <taxon>Klebsiella pneumoniae complex</taxon>
    </lineage>
</organism>
<evidence type="ECO:0000255" key="1">
    <source>
        <dbReference type="HAMAP-Rule" id="MF_01119"/>
    </source>
</evidence>
<comment type="subcellular location">
    <subcellularLocation>
        <location evidence="1">Cytoplasm</location>
    </subcellularLocation>
</comment>
<comment type="similarity">
    <text evidence="1">Belongs to the UPF0294 family.</text>
</comment>
<reference key="1">
    <citation type="journal article" date="2008" name="PLoS Genet.">
        <title>Complete genome sequence of the N2-fixing broad host range endophyte Klebsiella pneumoniae 342 and virulence predictions verified in mice.</title>
        <authorList>
            <person name="Fouts D.E."/>
            <person name="Tyler H.L."/>
            <person name="DeBoy R.T."/>
            <person name="Daugherty S."/>
            <person name="Ren Q."/>
            <person name="Badger J.H."/>
            <person name="Durkin A.S."/>
            <person name="Huot H."/>
            <person name="Shrivastava S."/>
            <person name="Kothari S."/>
            <person name="Dodson R.J."/>
            <person name="Mohamoud Y."/>
            <person name="Khouri H."/>
            <person name="Roesch L.F.W."/>
            <person name="Krogfelt K.A."/>
            <person name="Struve C."/>
            <person name="Triplett E.W."/>
            <person name="Methe B.A."/>
        </authorList>
    </citation>
    <scope>NUCLEOTIDE SEQUENCE [LARGE SCALE GENOMIC DNA]</scope>
    <source>
        <strain>342</strain>
    </source>
</reference>
<name>Y4510_KLEP3</name>
<protein>
    <recommendedName>
        <fullName evidence="1">UPF0294 protein KPK_4510</fullName>
    </recommendedName>
</protein>
<sequence>MRKNTYAMRYVAGQPAERILPPGAFAGVSPVYPAGTPLSSDEKIRVLVWNIFKQQRAEWQSVLKNFGKDAHLVLLQEAQTTPELVRFATSNYLAADQVPALVLPQHPSGVMTLASAHPIYCCPLREREPILRLPKSALVTVYPLPDARLLMVVNIHAVNFSLGVDVYSKQLLPIGDQIAHHSGPVIMAGDFNAWSRPRMNALYRFAREMSLREVRFSDDQRRRAFGRPLDFVFYRGLSVHDASVLVTRASDHNPLLVEFSPGKPD</sequence>
<dbReference type="EMBL" id="CP000964">
    <property type="protein sequence ID" value="ACI10605.1"/>
    <property type="molecule type" value="Genomic_DNA"/>
</dbReference>
<dbReference type="SMR" id="B5Y1G7"/>
<dbReference type="KEGG" id="kpe:KPK_4510"/>
<dbReference type="HOGENOM" id="CLU_083563_0_0_6"/>
<dbReference type="BioCyc" id="KPNE507522:GI0B-4491-MONOMER"/>
<dbReference type="Proteomes" id="UP000001734">
    <property type="component" value="Chromosome"/>
</dbReference>
<dbReference type="GO" id="GO:0005737">
    <property type="term" value="C:cytoplasm"/>
    <property type="evidence" value="ECO:0007669"/>
    <property type="project" value="UniProtKB-SubCell"/>
</dbReference>
<dbReference type="GO" id="GO:0003824">
    <property type="term" value="F:catalytic activity"/>
    <property type="evidence" value="ECO:0007669"/>
    <property type="project" value="InterPro"/>
</dbReference>
<dbReference type="Gene3D" id="3.60.10.10">
    <property type="entry name" value="Endonuclease/exonuclease/phosphatase"/>
    <property type="match status" value="1"/>
</dbReference>
<dbReference type="HAMAP" id="MF_01119">
    <property type="entry name" value="UPF0294"/>
    <property type="match status" value="1"/>
</dbReference>
<dbReference type="InterPro" id="IPR036691">
    <property type="entry name" value="Endo/exonu/phosph_ase_sf"/>
</dbReference>
<dbReference type="InterPro" id="IPR005135">
    <property type="entry name" value="Endo/exonuclease/phosphatase"/>
</dbReference>
<dbReference type="InterPro" id="IPR022958">
    <property type="entry name" value="UPF0294"/>
</dbReference>
<dbReference type="NCBIfam" id="NF003839">
    <property type="entry name" value="PRK05421.1-1"/>
    <property type="match status" value="1"/>
</dbReference>
<dbReference type="NCBIfam" id="NF003840">
    <property type="entry name" value="PRK05421.1-2"/>
    <property type="match status" value="1"/>
</dbReference>
<dbReference type="NCBIfam" id="NF003841">
    <property type="entry name" value="PRK05421.1-3"/>
    <property type="match status" value="1"/>
</dbReference>
<dbReference type="NCBIfam" id="NF003842">
    <property type="entry name" value="PRK05421.1-4"/>
    <property type="match status" value="1"/>
</dbReference>
<dbReference type="Pfam" id="PF03372">
    <property type="entry name" value="Exo_endo_phos"/>
    <property type="match status" value="1"/>
</dbReference>
<dbReference type="SUPFAM" id="SSF56219">
    <property type="entry name" value="DNase I-like"/>
    <property type="match status" value="1"/>
</dbReference>
<proteinExistence type="inferred from homology"/>
<keyword id="KW-0963">Cytoplasm</keyword>
<accession>B5Y1G7</accession>
<gene>
    <name type="ordered locus">KPK_4510</name>
</gene>
<feature type="chain" id="PRO_1000137246" description="UPF0294 protein KPK_4510">
    <location>
        <begin position="1"/>
        <end position="265"/>
    </location>
</feature>